<organism>
    <name type="scientific">Arabidopsis thaliana</name>
    <name type="common">Mouse-ear cress</name>
    <dbReference type="NCBI Taxonomy" id="3702"/>
    <lineage>
        <taxon>Eukaryota</taxon>
        <taxon>Viridiplantae</taxon>
        <taxon>Streptophyta</taxon>
        <taxon>Embryophyta</taxon>
        <taxon>Tracheophyta</taxon>
        <taxon>Spermatophyta</taxon>
        <taxon>Magnoliopsida</taxon>
        <taxon>eudicotyledons</taxon>
        <taxon>Gunneridae</taxon>
        <taxon>Pentapetalae</taxon>
        <taxon>rosids</taxon>
        <taxon>malvids</taxon>
        <taxon>Brassicales</taxon>
        <taxon>Brassicaceae</taxon>
        <taxon>Camelineae</taxon>
        <taxon>Arabidopsis</taxon>
    </lineage>
</organism>
<keyword id="KW-0067">ATP-binding</keyword>
<keyword id="KW-0156">Chromatin regulator</keyword>
<keyword id="KW-0227">DNA damage</keyword>
<keyword id="KW-0234">DNA repair</keyword>
<keyword id="KW-0347">Helicase</keyword>
<keyword id="KW-0378">Hydrolase</keyword>
<keyword id="KW-0479">Metal-binding</keyword>
<keyword id="KW-0547">Nucleotide-binding</keyword>
<keyword id="KW-0539">Nucleus</keyword>
<keyword id="KW-1185">Reference proteome</keyword>
<keyword id="KW-0862">Zinc</keyword>
<keyword id="KW-0863">Zinc-finger</keyword>
<feature type="chain" id="PRO_0000056189" description="DNA repair protein RAD5B">
    <location>
        <begin position="1"/>
        <end position="1277"/>
    </location>
</feature>
<feature type="domain" description="Helicase ATP-binding" evidence="3">
    <location>
        <begin position="674"/>
        <end position="871"/>
    </location>
</feature>
<feature type="domain" description="Helicase C-terminal" evidence="4">
    <location>
        <begin position="1113"/>
        <end position="1277"/>
    </location>
</feature>
<feature type="zinc finger region" description="RING-type" evidence="2">
    <location>
        <begin position="1040"/>
        <end position="1080"/>
    </location>
</feature>
<feature type="region of interest" description="Disordered" evidence="5">
    <location>
        <begin position="271"/>
        <end position="293"/>
    </location>
</feature>
<feature type="short sequence motif" description="DEAH box">
    <location>
        <begin position="822"/>
        <end position="825"/>
    </location>
</feature>
<feature type="binding site" evidence="3">
    <location>
        <begin position="687"/>
        <end position="694"/>
    </location>
    <ligand>
        <name>ATP</name>
        <dbReference type="ChEBI" id="CHEBI:30616"/>
    </ligand>
</feature>
<proteinExistence type="inferred from homology"/>
<protein>
    <recommendedName>
        <fullName evidence="8">DNA repair protein RAD5B</fullName>
        <ecNumber evidence="8">3.6.4.-</ecNumber>
    </recommendedName>
    <alternativeName>
        <fullName evidence="8">Putative SWI/SNF-related matrix-associated actin-dependent regulator of chromatin subfamily A member 3-like 3</fullName>
        <shortName evidence="8">SMARCA3-like protein 3</shortName>
    </alternativeName>
    <alternativeName>
        <fullName evidence="7">RAD5 homolog B</fullName>
        <shortName evidence="7">AtRAD5B</shortName>
    </alternativeName>
</protein>
<sequence>MAIVDDAEMRLTESEAVSSSDDRKIVADTPDFIDESSLVIRTTTGVRISALPAEQSLVDSDGSNSEVTLPAKDEVISDGFTCVNKEIVESDSFREQNLEIGEPDLDVENRKEAMIIDSIENSVVEIVSSASGDDCNVKVEVVEPELLVENLVVAKEEEEMIVDSIEDSVVEIVSTASGCDCNVKVEVVDPELCVDNLVVVKEEEMIADSIAESVVETVSRGLDYECVDVKVKEEPDLGTKLEEDSVFPNVLEKKDEVIKVLEDQPSEINKKLEQENDDLFSSGDSDGTSAKRRKMEMESYAPVGVESCILAPTPLRVVKPEKLDTPEVIDLESEKSYTHVKMEPVEEIKVEAVKMSSQVEDVKFSREQKSVYVKKEPVGARKVKVEDGDFPVEKDWYLVGRSLVTATSTSKGRKLEDNEIVNFTFSSVAKWKVPNIVRFSTKRCGEIGRLPMEWSNWAVSLLRSGKVKMLGRCVAAPPFLTMMQEIMLYVSFYIHSSIFTDVSKSTWRIGSSPNLESTLHPLLQLFKHLTIKPYQKAEFTPEELNSRKRSLNLEDDYDERAALLAIAKRRKGCQQSLEQNKDEEEAPESYMNRVVGAADSYNLEEMEAPSTLTCNLRPYQKQALYWMSESEKGIDVEKAAETLHPCWEAYRICDERAPSIYLNIFSGEATIQFPTATQMARGGILADAMGLGKTVMTIALILARPGRGNPENEDVLVADVNADKRNRKEIHMALTTVKAKGGTLIICPMALLSQWKDELETHSKPDTVSVLVYYGGDRTHDAKAIASHDVVLTTYGVLTSAYKQDMANSIFHRIDWYRIVLDEAHTIKSWKTQAAKATFELSSHCRWCLTGTPLQNKLEDLYSLLCFLHVEPWCNWAWWSKLIQKPYENGDPRGLKLIKAILRPLMLRRTKETRDKEGSLILELPPTDVQVIECEQSEAERDFYTALFKRSKVQFDQFVAQGKVLHNYANILELLLRLRQCCNHPFLVMSRADSQQYADLDSLARRFLDNNPDSVSQNAPSRAYIEEVIQDLRDGNSKECPICLESADDPVLTPCAHRMCRECLLTSWRSPSCGLCPICRTILKRTELISCPTDSIFRVDVVKNWKESSKVSELLKCLEKIKKSGSGEKSIVFSQWTSFLDLLEIPLRRRGFEFLRFDGKLAQKGREKVLKEFNETKQKTILLMSLKAGGVGLNLTAASSVFLMDPWWNPAVEEQAIMRIHRIGQKRTVFVRRFIVKDTVEERMQQVQARKQRMIAGALTDEEVRSARLEELKMLFR</sequence>
<evidence type="ECO:0000250" key="1"/>
<evidence type="ECO:0000255" key="2">
    <source>
        <dbReference type="PROSITE-ProRule" id="PRU00175"/>
    </source>
</evidence>
<evidence type="ECO:0000255" key="3">
    <source>
        <dbReference type="PROSITE-ProRule" id="PRU00541"/>
    </source>
</evidence>
<evidence type="ECO:0000255" key="4">
    <source>
        <dbReference type="PROSITE-ProRule" id="PRU00542"/>
    </source>
</evidence>
<evidence type="ECO:0000256" key="5">
    <source>
        <dbReference type="SAM" id="MobiDB-lite"/>
    </source>
</evidence>
<evidence type="ECO:0000269" key="6">
    <source>
    </source>
</evidence>
<evidence type="ECO:0000303" key="7">
    <source>
    </source>
</evidence>
<evidence type="ECO:0000305" key="8"/>
<gene>
    <name evidence="7" type="primary">RAD5B</name>
    <name type="ordered locus">At5g43530</name>
    <name type="ORF">K9D7.2</name>
</gene>
<dbReference type="EC" id="3.6.4.-" evidence="8"/>
<dbReference type="EMBL" id="AB016875">
    <property type="protein sequence ID" value="BAB11616.1"/>
    <property type="molecule type" value="Genomic_DNA"/>
</dbReference>
<dbReference type="EMBL" id="CP002688">
    <property type="protein sequence ID" value="AED94978.1"/>
    <property type="molecule type" value="Genomic_DNA"/>
</dbReference>
<dbReference type="RefSeq" id="NP_199166.1">
    <property type="nucleotide sequence ID" value="NM_123719.2"/>
</dbReference>
<dbReference type="SMR" id="Q9FIY7"/>
<dbReference type="FunCoup" id="Q9FIY7">
    <property type="interactions" value="529"/>
</dbReference>
<dbReference type="STRING" id="3702.Q9FIY7"/>
<dbReference type="PaxDb" id="3702-AT5G43530.1"/>
<dbReference type="ProteomicsDB" id="228442"/>
<dbReference type="EnsemblPlants" id="AT5G43530.1">
    <property type="protein sequence ID" value="AT5G43530.1"/>
    <property type="gene ID" value="AT5G43530"/>
</dbReference>
<dbReference type="GeneID" id="834373"/>
<dbReference type="Gramene" id="AT5G43530.1">
    <property type="protein sequence ID" value="AT5G43530.1"/>
    <property type="gene ID" value="AT5G43530"/>
</dbReference>
<dbReference type="KEGG" id="ath:AT5G43530"/>
<dbReference type="Araport" id="AT5G43530"/>
<dbReference type="TAIR" id="AT5G43530">
    <property type="gene designation" value="RAD5B"/>
</dbReference>
<dbReference type="eggNOG" id="KOG1001">
    <property type="taxonomic scope" value="Eukaryota"/>
</dbReference>
<dbReference type="HOGENOM" id="CLU_000315_2_5_1"/>
<dbReference type="InParanoid" id="Q9FIY7"/>
<dbReference type="OMA" id="LTSHCRW"/>
<dbReference type="PhylomeDB" id="Q9FIY7"/>
<dbReference type="PRO" id="PR:Q9FIY7"/>
<dbReference type="Proteomes" id="UP000006548">
    <property type="component" value="Chromosome 5"/>
</dbReference>
<dbReference type="ExpressionAtlas" id="Q9FIY7">
    <property type="expression patterns" value="baseline and differential"/>
</dbReference>
<dbReference type="GO" id="GO:0009941">
    <property type="term" value="C:chloroplast envelope"/>
    <property type="evidence" value="ECO:0007005"/>
    <property type="project" value="TAIR"/>
</dbReference>
<dbReference type="GO" id="GO:0005634">
    <property type="term" value="C:nucleus"/>
    <property type="evidence" value="ECO:0007669"/>
    <property type="project" value="UniProtKB-SubCell"/>
</dbReference>
<dbReference type="GO" id="GO:0005524">
    <property type="term" value="F:ATP binding"/>
    <property type="evidence" value="ECO:0007669"/>
    <property type="project" value="UniProtKB-KW"/>
</dbReference>
<dbReference type="GO" id="GO:0004386">
    <property type="term" value="F:helicase activity"/>
    <property type="evidence" value="ECO:0007669"/>
    <property type="project" value="UniProtKB-KW"/>
</dbReference>
<dbReference type="GO" id="GO:0016818">
    <property type="term" value="F:hydrolase activity, acting on acid anhydrides, in phosphorus-containing anhydrides"/>
    <property type="evidence" value="ECO:0007669"/>
    <property type="project" value="InterPro"/>
</dbReference>
<dbReference type="GO" id="GO:0003676">
    <property type="term" value="F:nucleic acid binding"/>
    <property type="evidence" value="ECO:0007669"/>
    <property type="project" value="InterPro"/>
</dbReference>
<dbReference type="GO" id="GO:0008270">
    <property type="term" value="F:zinc ion binding"/>
    <property type="evidence" value="ECO:0007669"/>
    <property type="project" value="UniProtKB-KW"/>
</dbReference>
<dbReference type="GO" id="GO:0006325">
    <property type="term" value="P:chromatin organization"/>
    <property type="evidence" value="ECO:0007669"/>
    <property type="project" value="UniProtKB-KW"/>
</dbReference>
<dbReference type="GO" id="GO:0006281">
    <property type="term" value="P:DNA repair"/>
    <property type="evidence" value="ECO:0007669"/>
    <property type="project" value="UniProtKB-KW"/>
</dbReference>
<dbReference type="CDD" id="cd18008">
    <property type="entry name" value="DEXDc_SHPRH-like"/>
    <property type="match status" value="1"/>
</dbReference>
<dbReference type="CDD" id="cd16449">
    <property type="entry name" value="RING-HC"/>
    <property type="match status" value="1"/>
</dbReference>
<dbReference type="CDD" id="cd18793">
    <property type="entry name" value="SF2_C_SNF"/>
    <property type="match status" value="1"/>
</dbReference>
<dbReference type="FunFam" id="3.40.50.10810:FF:000089">
    <property type="entry name" value="DNA repair protein RAD5B"/>
    <property type="match status" value="1"/>
</dbReference>
<dbReference type="FunFam" id="3.30.40.10:FF:001016">
    <property type="entry name" value="SNF2 domain-containing protein"/>
    <property type="match status" value="1"/>
</dbReference>
<dbReference type="Gene3D" id="3.40.50.300">
    <property type="entry name" value="P-loop containing nucleotide triphosphate hydrolases"/>
    <property type="match status" value="1"/>
</dbReference>
<dbReference type="Gene3D" id="3.40.50.10810">
    <property type="entry name" value="Tandem AAA-ATPase domain"/>
    <property type="match status" value="1"/>
</dbReference>
<dbReference type="Gene3D" id="3.30.40.10">
    <property type="entry name" value="Zinc/RING finger domain, C3HC4 (zinc finger)"/>
    <property type="match status" value="1"/>
</dbReference>
<dbReference type="InterPro" id="IPR014001">
    <property type="entry name" value="Helicase_ATP-bd"/>
</dbReference>
<dbReference type="InterPro" id="IPR001650">
    <property type="entry name" value="Helicase_C-like"/>
</dbReference>
<dbReference type="InterPro" id="IPR014905">
    <property type="entry name" value="HIRAN"/>
</dbReference>
<dbReference type="InterPro" id="IPR027417">
    <property type="entry name" value="P-loop_NTPase"/>
</dbReference>
<dbReference type="InterPro" id="IPR038718">
    <property type="entry name" value="SNF2-like_sf"/>
</dbReference>
<dbReference type="InterPro" id="IPR049730">
    <property type="entry name" value="SNF2/RAD54-like_C"/>
</dbReference>
<dbReference type="InterPro" id="IPR000330">
    <property type="entry name" value="SNF2_N"/>
</dbReference>
<dbReference type="InterPro" id="IPR050628">
    <property type="entry name" value="SNF2_RAD54_helicase_TF"/>
</dbReference>
<dbReference type="InterPro" id="IPR018957">
    <property type="entry name" value="Znf_C3HC4_RING-type"/>
</dbReference>
<dbReference type="InterPro" id="IPR001841">
    <property type="entry name" value="Znf_RING"/>
</dbReference>
<dbReference type="InterPro" id="IPR013083">
    <property type="entry name" value="Znf_RING/FYVE/PHD"/>
</dbReference>
<dbReference type="InterPro" id="IPR017907">
    <property type="entry name" value="Znf_RING_CS"/>
</dbReference>
<dbReference type="PANTHER" id="PTHR45626:SF22">
    <property type="entry name" value="DNA REPAIR PROTEIN RAD5"/>
    <property type="match status" value="1"/>
</dbReference>
<dbReference type="PANTHER" id="PTHR45626">
    <property type="entry name" value="TRANSCRIPTION TERMINATION FACTOR 2-RELATED"/>
    <property type="match status" value="1"/>
</dbReference>
<dbReference type="Pfam" id="PF00271">
    <property type="entry name" value="Helicase_C"/>
    <property type="match status" value="1"/>
</dbReference>
<dbReference type="Pfam" id="PF08797">
    <property type="entry name" value="HIRAN"/>
    <property type="match status" value="1"/>
</dbReference>
<dbReference type="Pfam" id="PF00176">
    <property type="entry name" value="SNF2-rel_dom"/>
    <property type="match status" value="1"/>
</dbReference>
<dbReference type="Pfam" id="PF00097">
    <property type="entry name" value="zf-C3HC4"/>
    <property type="match status" value="1"/>
</dbReference>
<dbReference type="SMART" id="SM00487">
    <property type="entry name" value="DEXDc"/>
    <property type="match status" value="1"/>
</dbReference>
<dbReference type="SMART" id="SM00490">
    <property type="entry name" value="HELICc"/>
    <property type="match status" value="1"/>
</dbReference>
<dbReference type="SMART" id="SM00910">
    <property type="entry name" value="HIRAN"/>
    <property type="match status" value="1"/>
</dbReference>
<dbReference type="SMART" id="SM00184">
    <property type="entry name" value="RING"/>
    <property type="match status" value="1"/>
</dbReference>
<dbReference type="SUPFAM" id="SSF52540">
    <property type="entry name" value="P-loop containing nucleoside triphosphate hydrolases"/>
    <property type="match status" value="2"/>
</dbReference>
<dbReference type="SUPFAM" id="SSF57850">
    <property type="entry name" value="RING/U-box"/>
    <property type="match status" value="1"/>
</dbReference>
<dbReference type="PROSITE" id="PS51192">
    <property type="entry name" value="HELICASE_ATP_BIND_1"/>
    <property type="match status" value="1"/>
</dbReference>
<dbReference type="PROSITE" id="PS51194">
    <property type="entry name" value="HELICASE_CTER"/>
    <property type="match status" value="1"/>
</dbReference>
<dbReference type="PROSITE" id="PS00518">
    <property type="entry name" value="ZF_RING_1"/>
    <property type="match status" value="1"/>
</dbReference>
<dbReference type="PROSITE" id="PS50089">
    <property type="entry name" value="ZF_RING_2"/>
    <property type="match status" value="1"/>
</dbReference>
<accession>Q9FIY7</accession>
<name>SM3L3_ARATH</name>
<reference key="1">
    <citation type="journal article" date="1998" name="DNA Res.">
        <title>Structural analysis of Arabidopsis thaliana chromosome 5. VIII. Sequence features of the regions of 1,081,958 bp covered by seventeen physically assigned P1 and TAC clones.</title>
        <authorList>
            <person name="Asamizu E."/>
            <person name="Sato S."/>
            <person name="Kaneko T."/>
            <person name="Nakamura Y."/>
            <person name="Kotani H."/>
            <person name="Miyajima N."/>
            <person name="Tabata S."/>
        </authorList>
    </citation>
    <scope>NUCLEOTIDE SEQUENCE [LARGE SCALE GENOMIC DNA]</scope>
    <source>
        <strain>cv. Columbia</strain>
    </source>
</reference>
<reference key="2">
    <citation type="journal article" date="2017" name="Plant J.">
        <title>Araport11: a complete reannotation of the Arabidopsis thaliana reference genome.</title>
        <authorList>
            <person name="Cheng C.Y."/>
            <person name="Krishnakumar V."/>
            <person name="Chan A.P."/>
            <person name="Thibaud-Nissen F."/>
            <person name="Schobel S."/>
            <person name="Town C.D."/>
        </authorList>
    </citation>
    <scope>GENOME REANNOTATION</scope>
    <source>
        <strain>cv. Columbia</strain>
    </source>
</reference>
<reference key="3">
    <citation type="journal article" date="2013" name="PLoS ONE">
        <title>Genome-wide comparative in silico analysis of the RNA helicase gene family in Zea mays and Glycine max: a comparison with Arabidopsis and Oryza sativa.</title>
        <authorList>
            <person name="Xu R."/>
            <person name="Zhang S."/>
            <person name="Huang J."/>
            <person name="Zheng C."/>
        </authorList>
    </citation>
    <scope>GENE FAMILY</scope>
</reference>
<reference key="4">
    <citation type="journal article" date="2008" name="Plant Physiol.">
        <title>A homolog of ScRAD5 is involved in DNA repair and homologous recombination in Arabidopsis.</title>
        <authorList>
            <person name="Chen I.P."/>
            <person name="Mannuss A."/>
            <person name="Orel N."/>
            <person name="Heitzeberg F."/>
            <person name="Puchta H."/>
        </authorList>
    </citation>
    <scope>FUNCTION</scope>
</reference>
<comment type="function">
    <text evidence="1 6">Possesses intrinsic ATP-dependent nucleosome-remodeling activity. This activity may be required for DNA repair. Does not seem to be required for DNA repair and regulation of homologous recombination (HR) (PubMed:18310306).</text>
</comment>
<comment type="subcellular location">
    <subcellularLocation>
        <location evidence="1">Nucleus</location>
    </subcellularLocation>
</comment>
<comment type="similarity">
    <text evidence="8">Belongs to the SNF2/RAD54 helicase family. RAD16 subfamily.</text>
</comment>